<name>RIMM_CORGL</name>
<sequence length="171" mass="18618">MSTEQELQIGKVVKSHGIRGEVVVELSTDDPDIRFAIGEVLNGKQAGKEHSLTIDAARMHQGRLLVKFAEVPDRTAADSLRGTRFFAAPLEDEDDEDGFYDHELEGLRVIHEGEDIGEVTGVMHGPAGEILEVRLTSGKETLIPFVHAIVPEVDLEEGTATITPPEGLLDL</sequence>
<evidence type="ECO:0000255" key="1">
    <source>
        <dbReference type="HAMAP-Rule" id="MF_00014"/>
    </source>
</evidence>
<proteinExistence type="inferred from homology"/>
<feature type="chain" id="PRO_0000163282" description="Ribosome maturation factor RimM">
    <location>
        <begin position="1"/>
        <end position="171"/>
    </location>
</feature>
<feature type="domain" description="PRC barrel" evidence="1">
    <location>
        <begin position="96"/>
        <end position="168"/>
    </location>
</feature>
<protein>
    <recommendedName>
        <fullName evidence="1">Ribosome maturation factor RimM</fullName>
    </recommendedName>
</protein>
<accession>Q8NNX5</accession>
<comment type="function">
    <text evidence="1">An accessory protein needed during the final step in the assembly of 30S ribosomal subunit, possibly for assembly of the head region. Essential for efficient processing of 16S rRNA. May be needed both before and after RbfA during the maturation of 16S rRNA. It has affinity for free ribosomal 30S subunits but not for 70S ribosomes.</text>
</comment>
<comment type="subunit">
    <text evidence="1">Binds ribosomal protein uS19.</text>
</comment>
<comment type="subcellular location">
    <subcellularLocation>
        <location evidence="1">Cytoplasm</location>
    </subcellularLocation>
</comment>
<comment type="domain">
    <text evidence="1">The PRC barrel domain binds ribosomal protein uS19.</text>
</comment>
<comment type="similarity">
    <text evidence="1">Belongs to the RimM family.</text>
</comment>
<keyword id="KW-0143">Chaperone</keyword>
<keyword id="KW-0963">Cytoplasm</keyword>
<keyword id="KW-1185">Reference proteome</keyword>
<keyword id="KW-0690">Ribosome biogenesis</keyword>
<keyword id="KW-0698">rRNA processing</keyword>
<reference key="1">
    <citation type="journal article" date="2003" name="Appl. Microbiol. Biotechnol.">
        <title>The Corynebacterium glutamicum genome: features and impacts on biotechnological processes.</title>
        <authorList>
            <person name="Ikeda M."/>
            <person name="Nakagawa S."/>
        </authorList>
    </citation>
    <scope>NUCLEOTIDE SEQUENCE [LARGE SCALE GENOMIC DNA]</scope>
    <source>
        <strain>ATCC 13032 / DSM 20300 / JCM 1318 / BCRC 11384 / CCUG 27702 / LMG 3730 / NBRC 12168 / NCIMB 10025 / NRRL B-2784 / 534</strain>
    </source>
</reference>
<reference key="2">
    <citation type="journal article" date="2003" name="J. Biotechnol.">
        <title>The complete Corynebacterium glutamicum ATCC 13032 genome sequence and its impact on the production of L-aspartate-derived amino acids and vitamins.</title>
        <authorList>
            <person name="Kalinowski J."/>
            <person name="Bathe B."/>
            <person name="Bartels D."/>
            <person name="Bischoff N."/>
            <person name="Bott M."/>
            <person name="Burkovski A."/>
            <person name="Dusch N."/>
            <person name="Eggeling L."/>
            <person name="Eikmanns B.J."/>
            <person name="Gaigalat L."/>
            <person name="Goesmann A."/>
            <person name="Hartmann M."/>
            <person name="Huthmacher K."/>
            <person name="Kraemer R."/>
            <person name="Linke B."/>
            <person name="McHardy A.C."/>
            <person name="Meyer F."/>
            <person name="Moeckel B."/>
            <person name="Pfefferle W."/>
            <person name="Puehler A."/>
            <person name="Rey D.A."/>
            <person name="Rueckert C."/>
            <person name="Rupp O."/>
            <person name="Sahm H."/>
            <person name="Wendisch V.F."/>
            <person name="Wiegraebe I."/>
            <person name="Tauch A."/>
        </authorList>
    </citation>
    <scope>NUCLEOTIDE SEQUENCE [LARGE SCALE GENOMIC DNA]</scope>
    <source>
        <strain>ATCC 13032 / DSM 20300 / JCM 1318 / BCRC 11384 / CCUG 27702 / LMG 3730 / NBRC 12168 / NCIMB 10025 / NRRL B-2784 / 534</strain>
    </source>
</reference>
<gene>
    <name evidence="1" type="primary">rimM</name>
    <name type="ordered locus">Cgl2052</name>
    <name type="ordered locus">cg2251</name>
</gene>
<dbReference type="EMBL" id="BA000036">
    <property type="protein sequence ID" value="BAB99445.1"/>
    <property type="molecule type" value="Genomic_DNA"/>
</dbReference>
<dbReference type="EMBL" id="BX927154">
    <property type="protein sequence ID" value="CAF20390.1"/>
    <property type="molecule type" value="Genomic_DNA"/>
</dbReference>
<dbReference type="RefSeq" id="NP_601255.1">
    <property type="nucleotide sequence ID" value="NC_003450.3"/>
</dbReference>
<dbReference type="RefSeq" id="WP_011014847.1">
    <property type="nucleotide sequence ID" value="NC_006958.1"/>
</dbReference>
<dbReference type="SMR" id="Q8NNX5"/>
<dbReference type="STRING" id="196627.cg2251"/>
<dbReference type="DNASU" id="1020006"/>
<dbReference type="GeneID" id="1020006"/>
<dbReference type="KEGG" id="cgb:cg2251"/>
<dbReference type="KEGG" id="cgl:Cgl2052"/>
<dbReference type="PATRIC" id="fig|196627.13.peg.1990"/>
<dbReference type="eggNOG" id="COG0806">
    <property type="taxonomic scope" value="Bacteria"/>
</dbReference>
<dbReference type="HOGENOM" id="CLU_077636_0_0_11"/>
<dbReference type="OrthoDB" id="5381335at2"/>
<dbReference type="BioCyc" id="CORYNE:G18NG-11644-MONOMER"/>
<dbReference type="Proteomes" id="UP000000582">
    <property type="component" value="Chromosome"/>
</dbReference>
<dbReference type="Proteomes" id="UP000001009">
    <property type="component" value="Chromosome"/>
</dbReference>
<dbReference type="GO" id="GO:0005737">
    <property type="term" value="C:cytoplasm"/>
    <property type="evidence" value="ECO:0007669"/>
    <property type="project" value="UniProtKB-SubCell"/>
</dbReference>
<dbReference type="GO" id="GO:0005840">
    <property type="term" value="C:ribosome"/>
    <property type="evidence" value="ECO:0007669"/>
    <property type="project" value="InterPro"/>
</dbReference>
<dbReference type="GO" id="GO:0043022">
    <property type="term" value="F:ribosome binding"/>
    <property type="evidence" value="ECO:0007669"/>
    <property type="project" value="InterPro"/>
</dbReference>
<dbReference type="GO" id="GO:0042274">
    <property type="term" value="P:ribosomal small subunit biogenesis"/>
    <property type="evidence" value="ECO:0007669"/>
    <property type="project" value="UniProtKB-UniRule"/>
</dbReference>
<dbReference type="GO" id="GO:0006364">
    <property type="term" value="P:rRNA processing"/>
    <property type="evidence" value="ECO:0007669"/>
    <property type="project" value="UniProtKB-UniRule"/>
</dbReference>
<dbReference type="Gene3D" id="2.30.30.240">
    <property type="entry name" value="PRC-barrel domain"/>
    <property type="match status" value="1"/>
</dbReference>
<dbReference type="Gene3D" id="2.40.30.60">
    <property type="entry name" value="RimM"/>
    <property type="match status" value="1"/>
</dbReference>
<dbReference type="HAMAP" id="MF_00014">
    <property type="entry name" value="Ribosome_mat_RimM"/>
    <property type="match status" value="1"/>
</dbReference>
<dbReference type="InterPro" id="IPR011033">
    <property type="entry name" value="PRC_barrel-like_sf"/>
</dbReference>
<dbReference type="InterPro" id="IPR056792">
    <property type="entry name" value="PRC_RimM"/>
</dbReference>
<dbReference type="InterPro" id="IPR011961">
    <property type="entry name" value="RimM"/>
</dbReference>
<dbReference type="InterPro" id="IPR002676">
    <property type="entry name" value="RimM_N"/>
</dbReference>
<dbReference type="InterPro" id="IPR036976">
    <property type="entry name" value="RimM_N_sf"/>
</dbReference>
<dbReference type="InterPro" id="IPR009000">
    <property type="entry name" value="Transl_B-barrel_sf"/>
</dbReference>
<dbReference type="NCBIfam" id="TIGR02273">
    <property type="entry name" value="16S_RimM"/>
    <property type="match status" value="1"/>
</dbReference>
<dbReference type="PANTHER" id="PTHR33692">
    <property type="entry name" value="RIBOSOME MATURATION FACTOR RIMM"/>
    <property type="match status" value="1"/>
</dbReference>
<dbReference type="PANTHER" id="PTHR33692:SF1">
    <property type="entry name" value="RIBOSOME MATURATION FACTOR RIMM"/>
    <property type="match status" value="1"/>
</dbReference>
<dbReference type="Pfam" id="PF24986">
    <property type="entry name" value="PRC_RimM"/>
    <property type="match status" value="1"/>
</dbReference>
<dbReference type="Pfam" id="PF01782">
    <property type="entry name" value="RimM"/>
    <property type="match status" value="1"/>
</dbReference>
<dbReference type="SUPFAM" id="SSF50346">
    <property type="entry name" value="PRC-barrel domain"/>
    <property type="match status" value="1"/>
</dbReference>
<dbReference type="SUPFAM" id="SSF50447">
    <property type="entry name" value="Translation proteins"/>
    <property type="match status" value="1"/>
</dbReference>
<organism>
    <name type="scientific">Corynebacterium glutamicum (strain ATCC 13032 / DSM 20300 / JCM 1318 / BCRC 11384 / CCUG 27702 / LMG 3730 / NBRC 12168 / NCIMB 10025 / NRRL B-2784 / 534)</name>
    <dbReference type="NCBI Taxonomy" id="196627"/>
    <lineage>
        <taxon>Bacteria</taxon>
        <taxon>Bacillati</taxon>
        <taxon>Actinomycetota</taxon>
        <taxon>Actinomycetes</taxon>
        <taxon>Mycobacteriales</taxon>
        <taxon>Corynebacteriaceae</taxon>
        <taxon>Corynebacterium</taxon>
    </lineage>
</organism>